<evidence type="ECO:0000255" key="1">
    <source>
        <dbReference type="HAMAP-Rule" id="MF_00610"/>
    </source>
</evidence>
<gene>
    <name evidence="1" type="primary">petA</name>
    <name type="ordered locus">PMN2A_1793</name>
</gene>
<accession>Q46GW2</accession>
<name>CYF_PROMT</name>
<proteinExistence type="inferred from homology"/>
<feature type="signal peptide" evidence="1">
    <location>
        <begin position="1"/>
        <end position="38"/>
    </location>
</feature>
<feature type="chain" id="PRO_5000100629" description="Cytochrome f">
    <location>
        <begin position="39"/>
        <end position="321"/>
    </location>
</feature>
<feature type="transmembrane region" description="Helical" evidence="1">
    <location>
        <begin position="288"/>
        <end position="308"/>
    </location>
</feature>
<feature type="binding site" description="axial binding residue" evidence="1">
    <location>
        <position position="39"/>
    </location>
    <ligand>
        <name>heme</name>
        <dbReference type="ChEBI" id="CHEBI:30413"/>
    </ligand>
    <ligandPart>
        <name>Fe</name>
        <dbReference type="ChEBI" id="CHEBI:18248"/>
    </ligandPart>
</feature>
<feature type="binding site" description="covalent" evidence="1">
    <location>
        <position position="59"/>
    </location>
    <ligand>
        <name>heme</name>
        <dbReference type="ChEBI" id="CHEBI:30413"/>
    </ligand>
</feature>
<feature type="binding site" description="covalent" evidence="1">
    <location>
        <position position="62"/>
    </location>
    <ligand>
        <name>heme</name>
        <dbReference type="ChEBI" id="CHEBI:30413"/>
    </ligand>
</feature>
<feature type="binding site" description="axial binding residue" evidence="1">
    <location>
        <position position="63"/>
    </location>
    <ligand>
        <name>heme</name>
        <dbReference type="ChEBI" id="CHEBI:30413"/>
    </ligand>
    <ligandPart>
        <name>Fe</name>
        <dbReference type="ChEBI" id="CHEBI:18248"/>
    </ligandPart>
</feature>
<sequence length="321" mass="35429">MKKNFYTISKTMSRSLKLILFSVFIGFSIFLIPQPTWAYPFWAQQKFENPREATGKIVCANCHVASMPTRAEVPQAVAADSVFKTVVEIPYKKDLQEIGADGSKVPLQVGAVVMLPDGFKLAPQERWTDEIKEETQGVYFTQYSEEQENIILVGPLPGDQNREIVFPVLSPDPRKDSNYNFGKYSIHVGGNRGRGQVYPTGEKSNNNLFTATNSGTITSIETNEDGSQIINLNNEEGESFTENLPAGTSLLIKEGDTIEKGAKLTEDPNVGGFGQLDKEIVLQSKARVIGMIIFFIGVGLSQIMLVLKKKQVEKVQAAEGI</sequence>
<comment type="function">
    <text evidence="1">Component of the cytochrome b6-f complex, which mediates electron transfer between photosystem II (PSII) and photosystem I (PSI), cyclic electron flow around PSI, and state transitions.</text>
</comment>
<comment type="cofactor">
    <cofactor evidence="1">
        <name>heme</name>
        <dbReference type="ChEBI" id="CHEBI:30413"/>
    </cofactor>
    <text evidence="1">Binds 1 heme group covalently.</text>
</comment>
<comment type="subunit">
    <text evidence="1">The 4 large subunits of the cytochrome b6-f complex are cytochrome b6, subunit IV (17 kDa polypeptide, PetD), cytochrome f and the Rieske protein, while the 4 small subunits are PetG, PetL, PetM and PetN. The complex functions as a dimer.</text>
</comment>
<comment type="subcellular location">
    <subcellularLocation>
        <location evidence="1">Cellular thylakoid membrane</location>
        <topology evidence="1">Single-pass membrane protein</topology>
    </subcellularLocation>
</comment>
<comment type="similarity">
    <text evidence="1">Belongs to the cytochrome f family.</text>
</comment>
<keyword id="KW-0249">Electron transport</keyword>
<keyword id="KW-0349">Heme</keyword>
<keyword id="KW-0408">Iron</keyword>
<keyword id="KW-0472">Membrane</keyword>
<keyword id="KW-0479">Metal-binding</keyword>
<keyword id="KW-0602">Photosynthesis</keyword>
<keyword id="KW-1185">Reference proteome</keyword>
<keyword id="KW-0732">Signal</keyword>
<keyword id="KW-0793">Thylakoid</keyword>
<keyword id="KW-0812">Transmembrane</keyword>
<keyword id="KW-1133">Transmembrane helix</keyword>
<keyword id="KW-0813">Transport</keyword>
<reference key="1">
    <citation type="journal article" date="2007" name="PLoS Genet.">
        <title>Patterns and implications of gene gain and loss in the evolution of Prochlorococcus.</title>
        <authorList>
            <person name="Kettler G.C."/>
            <person name="Martiny A.C."/>
            <person name="Huang K."/>
            <person name="Zucker J."/>
            <person name="Coleman M.L."/>
            <person name="Rodrigue S."/>
            <person name="Chen F."/>
            <person name="Lapidus A."/>
            <person name="Ferriera S."/>
            <person name="Johnson J."/>
            <person name="Steglich C."/>
            <person name="Church G.M."/>
            <person name="Richardson P."/>
            <person name="Chisholm S.W."/>
        </authorList>
    </citation>
    <scope>NUCLEOTIDE SEQUENCE [LARGE SCALE GENOMIC DNA]</scope>
    <source>
        <strain>NATL2A</strain>
    </source>
</reference>
<organism>
    <name type="scientific">Prochlorococcus marinus (strain NATL2A)</name>
    <dbReference type="NCBI Taxonomy" id="59920"/>
    <lineage>
        <taxon>Bacteria</taxon>
        <taxon>Bacillati</taxon>
        <taxon>Cyanobacteriota</taxon>
        <taxon>Cyanophyceae</taxon>
        <taxon>Synechococcales</taxon>
        <taxon>Prochlorococcaceae</taxon>
        <taxon>Prochlorococcus</taxon>
    </lineage>
</organism>
<protein>
    <recommendedName>
        <fullName evidence="1">Cytochrome f</fullName>
    </recommendedName>
</protein>
<dbReference type="EMBL" id="CP000095">
    <property type="protein sequence ID" value="AAZ59281.1"/>
    <property type="molecule type" value="Genomic_DNA"/>
</dbReference>
<dbReference type="SMR" id="Q46GW2"/>
<dbReference type="STRING" id="59920.PMN2A_1793"/>
<dbReference type="KEGG" id="pmn:PMN2A_1793"/>
<dbReference type="HOGENOM" id="CLU_033498_0_0_3"/>
<dbReference type="OrthoDB" id="581091at2"/>
<dbReference type="PhylomeDB" id="Q46GW2"/>
<dbReference type="Proteomes" id="UP000002535">
    <property type="component" value="Chromosome"/>
</dbReference>
<dbReference type="GO" id="GO:0031676">
    <property type="term" value="C:plasma membrane-derived thylakoid membrane"/>
    <property type="evidence" value="ECO:0007669"/>
    <property type="project" value="UniProtKB-SubCell"/>
</dbReference>
<dbReference type="GO" id="GO:0009055">
    <property type="term" value="F:electron transfer activity"/>
    <property type="evidence" value="ECO:0007669"/>
    <property type="project" value="UniProtKB-UniRule"/>
</dbReference>
<dbReference type="GO" id="GO:0020037">
    <property type="term" value="F:heme binding"/>
    <property type="evidence" value="ECO:0007669"/>
    <property type="project" value="InterPro"/>
</dbReference>
<dbReference type="GO" id="GO:0005506">
    <property type="term" value="F:iron ion binding"/>
    <property type="evidence" value="ECO:0007669"/>
    <property type="project" value="InterPro"/>
</dbReference>
<dbReference type="GO" id="GO:0015979">
    <property type="term" value="P:photosynthesis"/>
    <property type="evidence" value="ECO:0007669"/>
    <property type="project" value="UniProtKB-UniRule"/>
</dbReference>
<dbReference type="Gene3D" id="2.40.50.100">
    <property type="match status" value="1"/>
</dbReference>
<dbReference type="Gene3D" id="2.60.40.830">
    <property type="entry name" value="Cytochrome f large domain"/>
    <property type="match status" value="1"/>
</dbReference>
<dbReference type="Gene3D" id="1.20.5.700">
    <property type="entry name" value="Single helix bin"/>
    <property type="match status" value="1"/>
</dbReference>
<dbReference type="HAMAP" id="MF_00610">
    <property type="entry name" value="Cytb6_f_cytF"/>
    <property type="match status" value="1"/>
</dbReference>
<dbReference type="InterPro" id="IPR024058">
    <property type="entry name" value="Cyt-f_TM"/>
</dbReference>
<dbReference type="InterPro" id="IPR002325">
    <property type="entry name" value="Cyt_f"/>
</dbReference>
<dbReference type="InterPro" id="IPR024094">
    <property type="entry name" value="Cyt_f_lg_dom"/>
</dbReference>
<dbReference type="InterPro" id="IPR036826">
    <property type="entry name" value="Cyt_f_lg_dom_sf"/>
</dbReference>
<dbReference type="InterPro" id="IPR011054">
    <property type="entry name" value="Rudment_hybrid_motif"/>
</dbReference>
<dbReference type="NCBIfam" id="NF002736">
    <property type="entry name" value="PRK02693.1"/>
    <property type="match status" value="1"/>
</dbReference>
<dbReference type="PANTHER" id="PTHR33288">
    <property type="match status" value="1"/>
</dbReference>
<dbReference type="PANTHER" id="PTHR33288:SF10">
    <property type="entry name" value="CYTOCHROME F"/>
    <property type="match status" value="1"/>
</dbReference>
<dbReference type="Pfam" id="PF01333">
    <property type="entry name" value="Apocytochr_F_C"/>
    <property type="match status" value="1"/>
</dbReference>
<dbReference type="Pfam" id="PF16639">
    <property type="entry name" value="Apocytochr_F_N"/>
    <property type="match status" value="1"/>
</dbReference>
<dbReference type="PRINTS" id="PR00610">
    <property type="entry name" value="CYTOCHROMEF"/>
</dbReference>
<dbReference type="SUPFAM" id="SSF103431">
    <property type="entry name" value="Cytochrome f subunit of the cytochrome b6f complex, transmembrane anchor"/>
    <property type="match status" value="1"/>
</dbReference>
<dbReference type="SUPFAM" id="SSF49441">
    <property type="entry name" value="Cytochrome f, large domain"/>
    <property type="match status" value="1"/>
</dbReference>
<dbReference type="SUPFAM" id="SSF51246">
    <property type="entry name" value="Rudiment single hybrid motif"/>
    <property type="match status" value="1"/>
</dbReference>
<dbReference type="PROSITE" id="PS51010">
    <property type="entry name" value="CYTF"/>
    <property type="match status" value="1"/>
</dbReference>